<name>HIS2_PELPD</name>
<proteinExistence type="inferred from homology"/>
<sequence>MTEQNHILDAVYGVILARKATQTENSYTASLMRKGLDSVLKKVGEEATELVIAGKGGVADEVVYEAADLFFHTLLLLSYQDIPLERVYTELRRRFGISGIDEKNSRTT</sequence>
<protein>
    <recommendedName>
        <fullName evidence="1">Phosphoribosyl-ATP pyrophosphatase</fullName>
        <shortName evidence="1">PRA-PH</shortName>
        <ecNumber evidence="1">3.6.1.31</ecNumber>
    </recommendedName>
</protein>
<gene>
    <name evidence="1" type="primary">hisE</name>
    <name type="ordered locus">Ppro_3054</name>
</gene>
<organism>
    <name type="scientific">Pelobacter propionicus (strain DSM 2379 / NBRC 103807 / OttBd1)</name>
    <dbReference type="NCBI Taxonomy" id="338966"/>
    <lineage>
        <taxon>Bacteria</taxon>
        <taxon>Pseudomonadati</taxon>
        <taxon>Thermodesulfobacteriota</taxon>
        <taxon>Desulfuromonadia</taxon>
        <taxon>Desulfuromonadales</taxon>
        <taxon>Desulfuromonadaceae</taxon>
        <taxon>Pelobacter</taxon>
    </lineage>
</organism>
<comment type="catalytic activity">
    <reaction evidence="1">
        <text>1-(5-phospho-beta-D-ribosyl)-ATP + H2O = 1-(5-phospho-beta-D-ribosyl)-5'-AMP + diphosphate + H(+)</text>
        <dbReference type="Rhea" id="RHEA:22828"/>
        <dbReference type="ChEBI" id="CHEBI:15377"/>
        <dbReference type="ChEBI" id="CHEBI:15378"/>
        <dbReference type="ChEBI" id="CHEBI:33019"/>
        <dbReference type="ChEBI" id="CHEBI:59457"/>
        <dbReference type="ChEBI" id="CHEBI:73183"/>
        <dbReference type="EC" id="3.6.1.31"/>
    </reaction>
</comment>
<comment type="pathway">
    <text evidence="1">Amino-acid biosynthesis; L-histidine biosynthesis; L-histidine from 5-phospho-alpha-D-ribose 1-diphosphate: step 2/9.</text>
</comment>
<comment type="subcellular location">
    <subcellularLocation>
        <location evidence="1">Cytoplasm</location>
    </subcellularLocation>
</comment>
<comment type="similarity">
    <text evidence="1">Belongs to the PRA-PH family.</text>
</comment>
<evidence type="ECO:0000255" key="1">
    <source>
        <dbReference type="HAMAP-Rule" id="MF_01020"/>
    </source>
</evidence>
<dbReference type="EC" id="3.6.1.31" evidence="1"/>
<dbReference type="EMBL" id="CP000482">
    <property type="protein sequence ID" value="ABL00650.1"/>
    <property type="molecule type" value="Genomic_DNA"/>
</dbReference>
<dbReference type="RefSeq" id="WP_011736885.1">
    <property type="nucleotide sequence ID" value="NC_008609.1"/>
</dbReference>
<dbReference type="SMR" id="A1ATH9"/>
<dbReference type="STRING" id="338966.Ppro_3054"/>
<dbReference type="KEGG" id="ppd:Ppro_3054"/>
<dbReference type="eggNOG" id="COG0140">
    <property type="taxonomic scope" value="Bacteria"/>
</dbReference>
<dbReference type="HOGENOM" id="CLU_123337_1_2_7"/>
<dbReference type="OrthoDB" id="9795769at2"/>
<dbReference type="UniPathway" id="UPA00031">
    <property type="reaction ID" value="UER00007"/>
</dbReference>
<dbReference type="Proteomes" id="UP000006732">
    <property type="component" value="Chromosome"/>
</dbReference>
<dbReference type="GO" id="GO:0005737">
    <property type="term" value="C:cytoplasm"/>
    <property type="evidence" value="ECO:0007669"/>
    <property type="project" value="UniProtKB-SubCell"/>
</dbReference>
<dbReference type="GO" id="GO:0005524">
    <property type="term" value="F:ATP binding"/>
    <property type="evidence" value="ECO:0007669"/>
    <property type="project" value="UniProtKB-KW"/>
</dbReference>
<dbReference type="GO" id="GO:0004636">
    <property type="term" value="F:phosphoribosyl-ATP diphosphatase activity"/>
    <property type="evidence" value="ECO:0007669"/>
    <property type="project" value="UniProtKB-UniRule"/>
</dbReference>
<dbReference type="GO" id="GO:0000105">
    <property type="term" value="P:L-histidine biosynthetic process"/>
    <property type="evidence" value="ECO:0007669"/>
    <property type="project" value="UniProtKB-UniRule"/>
</dbReference>
<dbReference type="CDD" id="cd11534">
    <property type="entry name" value="NTP-PPase_HisIE_like"/>
    <property type="match status" value="1"/>
</dbReference>
<dbReference type="Gene3D" id="1.10.287.1080">
    <property type="entry name" value="MazG-like"/>
    <property type="match status" value="1"/>
</dbReference>
<dbReference type="HAMAP" id="MF_01020">
    <property type="entry name" value="HisE"/>
    <property type="match status" value="1"/>
</dbReference>
<dbReference type="InterPro" id="IPR008179">
    <property type="entry name" value="HisE"/>
</dbReference>
<dbReference type="InterPro" id="IPR021130">
    <property type="entry name" value="PRib-ATP_PPHydrolase-like"/>
</dbReference>
<dbReference type="NCBIfam" id="TIGR03188">
    <property type="entry name" value="histidine_hisI"/>
    <property type="match status" value="1"/>
</dbReference>
<dbReference type="NCBIfam" id="NF001611">
    <property type="entry name" value="PRK00400.1-3"/>
    <property type="match status" value="1"/>
</dbReference>
<dbReference type="PANTHER" id="PTHR42945">
    <property type="entry name" value="HISTIDINE BIOSYNTHESIS BIFUNCTIONAL PROTEIN"/>
    <property type="match status" value="1"/>
</dbReference>
<dbReference type="PANTHER" id="PTHR42945:SF9">
    <property type="entry name" value="HISTIDINE BIOSYNTHESIS BIFUNCTIONAL PROTEIN HISIE"/>
    <property type="match status" value="1"/>
</dbReference>
<dbReference type="Pfam" id="PF01503">
    <property type="entry name" value="PRA-PH"/>
    <property type="match status" value="1"/>
</dbReference>
<dbReference type="SUPFAM" id="SSF101386">
    <property type="entry name" value="all-alpha NTP pyrophosphatases"/>
    <property type="match status" value="1"/>
</dbReference>
<feature type="chain" id="PRO_1000063367" description="Phosphoribosyl-ATP pyrophosphatase">
    <location>
        <begin position="1"/>
        <end position="108"/>
    </location>
</feature>
<accession>A1ATH9</accession>
<reference key="1">
    <citation type="submission" date="2006-10" db="EMBL/GenBank/DDBJ databases">
        <title>Complete sequence of chromosome of Pelobacter propionicus DSM 2379.</title>
        <authorList>
            <consortium name="US DOE Joint Genome Institute"/>
            <person name="Copeland A."/>
            <person name="Lucas S."/>
            <person name="Lapidus A."/>
            <person name="Barry K."/>
            <person name="Detter J.C."/>
            <person name="Glavina del Rio T."/>
            <person name="Hammon N."/>
            <person name="Israni S."/>
            <person name="Dalin E."/>
            <person name="Tice H."/>
            <person name="Pitluck S."/>
            <person name="Saunders E."/>
            <person name="Brettin T."/>
            <person name="Bruce D."/>
            <person name="Han C."/>
            <person name="Tapia R."/>
            <person name="Schmutz J."/>
            <person name="Larimer F."/>
            <person name="Land M."/>
            <person name="Hauser L."/>
            <person name="Kyrpides N."/>
            <person name="Kim E."/>
            <person name="Lovley D."/>
            <person name="Richardson P."/>
        </authorList>
    </citation>
    <scope>NUCLEOTIDE SEQUENCE [LARGE SCALE GENOMIC DNA]</scope>
    <source>
        <strain>DSM 2379 / NBRC 103807 / OttBd1</strain>
    </source>
</reference>
<keyword id="KW-0028">Amino-acid biosynthesis</keyword>
<keyword id="KW-0067">ATP-binding</keyword>
<keyword id="KW-0963">Cytoplasm</keyword>
<keyword id="KW-0368">Histidine biosynthesis</keyword>
<keyword id="KW-0378">Hydrolase</keyword>
<keyword id="KW-0547">Nucleotide-binding</keyword>
<keyword id="KW-1185">Reference proteome</keyword>